<reference key="1">
    <citation type="journal article" date="2005" name="J. Bacteriol.">
        <title>Whole-genome sequencing of Staphylococcus haemolyticus uncovers the extreme plasticity of its genome and the evolution of human-colonizing staphylococcal species.</title>
        <authorList>
            <person name="Takeuchi F."/>
            <person name="Watanabe S."/>
            <person name="Baba T."/>
            <person name="Yuzawa H."/>
            <person name="Ito T."/>
            <person name="Morimoto Y."/>
            <person name="Kuroda M."/>
            <person name="Cui L."/>
            <person name="Takahashi M."/>
            <person name="Ankai A."/>
            <person name="Baba S."/>
            <person name="Fukui S."/>
            <person name="Lee J.C."/>
            <person name="Hiramatsu K."/>
        </authorList>
    </citation>
    <scope>NUCLEOTIDE SEQUENCE [LARGE SCALE GENOMIC DNA]</scope>
    <source>
        <strain>JCSC1435</strain>
    </source>
</reference>
<gene>
    <name evidence="1" type="primary">era</name>
    <name type="ordered locus">SH1349</name>
</gene>
<name>ERA_STAHJ</name>
<organism>
    <name type="scientific">Staphylococcus haemolyticus (strain JCSC1435)</name>
    <dbReference type="NCBI Taxonomy" id="279808"/>
    <lineage>
        <taxon>Bacteria</taxon>
        <taxon>Bacillati</taxon>
        <taxon>Bacillota</taxon>
        <taxon>Bacilli</taxon>
        <taxon>Bacillales</taxon>
        <taxon>Staphylococcaceae</taxon>
        <taxon>Staphylococcus</taxon>
    </lineage>
</organism>
<accession>Q4L6R7</accession>
<proteinExistence type="inferred from homology"/>
<comment type="function">
    <text evidence="1">An essential GTPase that binds both GDP and GTP, with rapid nucleotide exchange. Plays a role in 16S rRNA processing and 30S ribosomal subunit biogenesis and possibly also in cell cycle regulation and energy metabolism.</text>
</comment>
<comment type="subunit">
    <text evidence="1">Monomer.</text>
</comment>
<comment type="subcellular location">
    <subcellularLocation>
        <location>Cytoplasm</location>
    </subcellularLocation>
    <subcellularLocation>
        <location evidence="1">Cell membrane</location>
        <topology evidence="1">Peripheral membrane protein</topology>
    </subcellularLocation>
</comment>
<comment type="similarity">
    <text evidence="1 2">Belongs to the TRAFAC class TrmE-Era-EngA-EngB-Septin-like GTPase superfamily. Era GTPase family.</text>
</comment>
<comment type="sequence caution" evidence="3">
    <conflict type="erroneous initiation">
        <sequence resource="EMBL-CDS" id="BAE04658"/>
    </conflict>
    <text>Truncated N-terminus.</text>
</comment>
<sequence length="299" mass="34504">MTEHKSGFVSIIGRPNVGKSTFMNRVIGHKIAIMSDKAQTTRNKIQGVMTRNDAQIIFLDTPGIHKPKHKLGDYMMRVAKNTLSEIDAIMFMVNVNEEIGRGDEYIMEMLKNVKTPVFLVLNKIDLVHPDALMPRIEQYQKYMNFTEIVPISALEGLNVDHFIDVLKTYLPEGPKYYPDDQISDHPEQFVVSEIIREKILHLTSEEIPHAIGVNVDRMIKENDERVRVEATIYVERDSQKGIVIGKGGKKLKEVGKRARHDIEMLLGSKVYLELWVKVQKDWRNKVNFIRQMGYIEDQD</sequence>
<dbReference type="EMBL" id="AP006716">
    <property type="protein sequence ID" value="BAE04658.1"/>
    <property type="status" value="ALT_INIT"/>
    <property type="molecule type" value="Genomic_DNA"/>
</dbReference>
<dbReference type="RefSeq" id="WP_011275645.1">
    <property type="nucleotide sequence ID" value="NC_007168.1"/>
</dbReference>
<dbReference type="SMR" id="Q4L6R7"/>
<dbReference type="GeneID" id="93780749"/>
<dbReference type="KEGG" id="sha:SH1349"/>
<dbReference type="eggNOG" id="COG1159">
    <property type="taxonomic scope" value="Bacteria"/>
</dbReference>
<dbReference type="HOGENOM" id="CLU_038009_1_2_9"/>
<dbReference type="OrthoDB" id="9805918at2"/>
<dbReference type="Proteomes" id="UP000000543">
    <property type="component" value="Chromosome"/>
</dbReference>
<dbReference type="GO" id="GO:0005829">
    <property type="term" value="C:cytosol"/>
    <property type="evidence" value="ECO:0007669"/>
    <property type="project" value="TreeGrafter"/>
</dbReference>
<dbReference type="GO" id="GO:0005886">
    <property type="term" value="C:plasma membrane"/>
    <property type="evidence" value="ECO:0007669"/>
    <property type="project" value="UniProtKB-SubCell"/>
</dbReference>
<dbReference type="GO" id="GO:0005525">
    <property type="term" value="F:GTP binding"/>
    <property type="evidence" value="ECO:0007669"/>
    <property type="project" value="UniProtKB-UniRule"/>
</dbReference>
<dbReference type="GO" id="GO:0003924">
    <property type="term" value="F:GTPase activity"/>
    <property type="evidence" value="ECO:0007669"/>
    <property type="project" value="UniProtKB-UniRule"/>
</dbReference>
<dbReference type="GO" id="GO:0043024">
    <property type="term" value="F:ribosomal small subunit binding"/>
    <property type="evidence" value="ECO:0007669"/>
    <property type="project" value="TreeGrafter"/>
</dbReference>
<dbReference type="GO" id="GO:0070181">
    <property type="term" value="F:small ribosomal subunit rRNA binding"/>
    <property type="evidence" value="ECO:0007669"/>
    <property type="project" value="UniProtKB-UniRule"/>
</dbReference>
<dbReference type="GO" id="GO:0000028">
    <property type="term" value="P:ribosomal small subunit assembly"/>
    <property type="evidence" value="ECO:0007669"/>
    <property type="project" value="TreeGrafter"/>
</dbReference>
<dbReference type="CDD" id="cd04163">
    <property type="entry name" value="Era"/>
    <property type="match status" value="1"/>
</dbReference>
<dbReference type="CDD" id="cd22534">
    <property type="entry name" value="KH-II_Era"/>
    <property type="match status" value="1"/>
</dbReference>
<dbReference type="FunFam" id="3.30.300.20:FF:000003">
    <property type="entry name" value="GTPase Era"/>
    <property type="match status" value="1"/>
</dbReference>
<dbReference type="FunFam" id="3.40.50.300:FF:000094">
    <property type="entry name" value="GTPase Era"/>
    <property type="match status" value="1"/>
</dbReference>
<dbReference type="Gene3D" id="3.30.300.20">
    <property type="match status" value="1"/>
</dbReference>
<dbReference type="Gene3D" id="3.40.50.300">
    <property type="entry name" value="P-loop containing nucleotide triphosphate hydrolases"/>
    <property type="match status" value="1"/>
</dbReference>
<dbReference type="HAMAP" id="MF_00367">
    <property type="entry name" value="GTPase_Era"/>
    <property type="match status" value="1"/>
</dbReference>
<dbReference type="InterPro" id="IPR030388">
    <property type="entry name" value="G_ERA_dom"/>
</dbReference>
<dbReference type="InterPro" id="IPR006073">
    <property type="entry name" value="GTP-bd"/>
</dbReference>
<dbReference type="InterPro" id="IPR005662">
    <property type="entry name" value="GTPase_Era-like"/>
</dbReference>
<dbReference type="InterPro" id="IPR015946">
    <property type="entry name" value="KH_dom-like_a/b"/>
</dbReference>
<dbReference type="InterPro" id="IPR004044">
    <property type="entry name" value="KH_dom_type_2"/>
</dbReference>
<dbReference type="InterPro" id="IPR009019">
    <property type="entry name" value="KH_sf_prok-type"/>
</dbReference>
<dbReference type="InterPro" id="IPR027417">
    <property type="entry name" value="P-loop_NTPase"/>
</dbReference>
<dbReference type="InterPro" id="IPR005225">
    <property type="entry name" value="Small_GTP-bd"/>
</dbReference>
<dbReference type="NCBIfam" id="TIGR00436">
    <property type="entry name" value="era"/>
    <property type="match status" value="1"/>
</dbReference>
<dbReference type="NCBIfam" id="NF000908">
    <property type="entry name" value="PRK00089.1"/>
    <property type="match status" value="1"/>
</dbReference>
<dbReference type="NCBIfam" id="TIGR00231">
    <property type="entry name" value="small_GTP"/>
    <property type="match status" value="1"/>
</dbReference>
<dbReference type="PANTHER" id="PTHR42698">
    <property type="entry name" value="GTPASE ERA"/>
    <property type="match status" value="1"/>
</dbReference>
<dbReference type="PANTHER" id="PTHR42698:SF1">
    <property type="entry name" value="GTPASE ERA, MITOCHONDRIAL"/>
    <property type="match status" value="1"/>
</dbReference>
<dbReference type="Pfam" id="PF07650">
    <property type="entry name" value="KH_2"/>
    <property type="match status" value="1"/>
</dbReference>
<dbReference type="Pfam" id="PF01926">
    <property type="entry name" value="MMR_HSR1"/>
    <property type="match status" value="1"/>
</dbReference>
<dbReference type="SUPFAM" id="SSF52540">
    <property type="entry name" value="P-loop containing nucleoside triphosphate hydrolases"/>
    <property type="match status" value="1"/>
</dbReference>
<dbReference type="SUPFAM" id="SSF54814">
    <property type="entry name" value="Prokaryotic type KH domain (KH-domain type II)"/>
    <property type="match status" value="1"/>
</dbReference>
<dbReference type="PROSITE" id="PS51713">
    <property type="entry name" value="G_ERA"/>
    <property type="match status" value="1"/>
</dbReference>
<dbReference type="PROSITE" id="PS50823">
    <property type="entry name" value="KH_TYPE_2"/>
    <property type="match status" value="1"/>
</dbReference>
<protein>
    <recommendedName>
        <fullName evidence="1">GTPase Era</fullName>
    </recommendedName>
</protein>
<keyword id="KW-1003">Cell membrane</keyword>
<keyword id="KW-0963">Cytoplasm</keyword>
<keyword id="KW-0342">GTP-binding</keyword>
<keyword id="KW-0472">Membrane</keyword>
<keyword id="KW-0547">Nucleotide-binding</keyword>
<keyword id="KW-0690">Ribosome biogenesis</keyword>
<keyword id="KW-0694">RNA-binding</keyword>
<keyword id="KW-0699">rRNA-binding</keyword>
<feature type="chain" id="PRO_0000403971" description="GTPase Era">
    <location>
        <begin position="1"/>
        <end position="299"/>
    </location>
</feature>
<feature type="domain" description="Era-type G" evidence="2">
    <location>
        <begin position="5"/>
        <end position="172"/>
    </location>
</feature>
<feature type="domain" description="KH type-2" evidence="1">
    <location>
        <begin position="203"/>
        <end position="280"/>
    </location>
</feature>
<feature type="region of interest" description="G1" evidence="2">
    <location>
        <begin position="13"/>
        <end position="20"/>
    </location>
</feature>
<feature type="region of interest" description="G2" evidence="2">
    <location>
        <begin position="39"/>
        <end position="43"/>
    </location>
</feature>
<feature type="region of interest" description="G3" evidence="2">
    <location>
        <begin position="60"/>
        <end position="63"/>
    </location>
</feature>
<feature type="region of interest" description="G4" evidence="2">
    <location>
        <begin position="122"/>
        <end position="125"/>
    </location>
</feature>
<feature type="region of interest" description="G5" evidence="2">
    <location>
        <begin position="151"/>
        <end position="153"/>
    </location>
</feature>
<feature type="binding site" evidence="1">
    <location>
        <begin position="13"/>
        <end position="20"/>
    </location>
    <ligand>
        <name>GTP</name>
        <dbReference type="ChEBI" id="CHEBI:37565"/>
    </ligand>
</feature>
<feature type="binding site" evidence="1">
    <location>
        <begin position="60"/>
        <end position="64"/>
    </location>
    <ligand>
        <name>GTP</name>
        <dbReference type="ChEBI" id="CHEBI:37565"/>
    </ligand>
</feature>
<feature type="binding site" evidence="1">
    <location>
        <begin position="122"/>
        <end position="125"/>
    </location>
    <ligand>
        <name>GTP</name>
        <dbReference type="ChEBI" id="CHEBI:37565"/>
    </ligand>
</feature>
<evidence type="ECO:0000255" key="1">
    <source>
        <dbReference type="HAMAP-Rule" id="MF_00367"/>
    </source>
</evidence>
<evidence type="ECO:0000255" key="2">
    <source>
        <dbReference type="PROSITE-ProRule" id="PRU01050"/>
    </source>
</evidence>
<evidence type="ECO:0000305" key="3"/>